<evidence type="ECO:0000255" key="1">
    <source>
        <dbReference type="HAMAP-Rule" id="MF_00021"/>
    </source>
</evidence>
<dbReference type="EC" id="2.8.1.4" evidence="1"/>
<dbReference type="EMBL" id="CP001127">
    <property type="protein sequence ID" value="ACF89796.1"/>
    <property type="molecule type" value="Genomic_DNA"/>
</dbReference>
<dbReference type="RefSeq" id="WP_000668648.1">
    <property type="nucleotide sequence ID" value="NC_011094.1"/>
</dbReference>
<dbReference type="SMR" id="B4TMA5"/>
<dbReference type="KEGG" id="sew:SeSA_A0485"/>
<dbReference type="HOGENOM" id="CLU_037952_4_1_6"/>
<dbReference type="UniPathway" id="UPA00060"/>
<dbReference type="Proteomes" id="UP000001865">
    <property type="component" value="Chromosome"/>
</dbReference>
<dbReference type="GO" id="GO:0005829">
    <property type="term" value="C:cytosol"/>
    <property type="evidence" value="ECO:0007669"/>
    <property type="project" value="TreeGrafter"/>
</dbReference>
<dbReference type="GO" id="GO:0005524">
    <property type="term" value="F:ATP binding"/>
    <property type="evidence" value="ECO:0007669"/>
    <property type="project" value="UniProtKB-UniRule"/>
</dbReference>
<dbReference type="GO" id="GO:0004810">
    <property type="term" value="F:CCA tRNA nucleotidyltransferase activity"/>
    <property type="evidence" value="ECO:0007669"/>
    <property type="project" value="InterPro"/>
</dbReference>
<dbReference type="GO" id="GO:0000049">
    <property type="term" value="F:tRNA binding"/>
    <property type="evidence" value="ECO:0007669"/>
    <property type="project" value="UniProtKB-UniRule"/>
</dbReference>
<dbReference type="GO" id="GO:0140741">
    <property type="term" value="F:tRNA-uracil-4 sulfurtransferase activity"/>
    <property type="evidence" value="ECO:0007669"/>
    <property type="project" value="UniProtKB-EC"/>
</dbReference>
<dbReference type="GO" id="GO:0009228">
    <property type="term" value="P:thiamine biosynthetic process"/>
    <property type="evidence" value="ECO:0007669"/>
    <property type="project" value="UniProtKB-KW"/>
</dbReference>
<dbReference type="GO" id="GO:0009229">
    <property type="term" value="P:thiamine diphosphate biosynthetic process"/>
    <property type="evidence" value="ECO:0007669"/>
    <property type="project" value="UniProtKB-UniRule"/>
</dbReference>
<dbReference type="GO" id="GO:0052837">
    <property type="term" value="P:thiazole biosynthetic process"/>
    <property type="evidence" value="ECO:0007669"/>
    <property type="project" value="InterPro"/>
</dbReference>
<dbReference type="GO" id="GO:0002937">
    <property type="term" value="P:tRNA 4-thiouridine biosynthesis"/>
    <property type="evidence" value="ECO:0007669"/>
    <property type="project" value="TreeGrafter"/>
</dbReference>
<dbReference type="CDD" id="cd01712">
    <property type="entry name" value="PPase_ThiI"/>
    <property type="match status" value="1"/>
</dbReference>
<dbReference type="CDD" id="cd00158">
    <property type="entry name" value="RHOD"/>
    <property type="match status" value="1"/>
</dbReference>
<dbReference type="CDD" id="cd11716">
    <property type="entry name" value="THUMP_ThiI"/>
    <property type="match status" value="1"/>
</dbReference>
<dbReference type="FunFam" id="3.30.2130.30:FF:000002">
    <property type="entry name" value="tRNA sulfurtransferase"/>
    <property type="match status" value="1"/>
</dbReference>
<dbReference type="FunFam" id="3.40.250.10:FF:000003">
    <property type="entry name" value="tRNA sulfurtransferase"/>
    <property type="match status" value="1"/>
</dbReference>
<dbReference type="FunFam" id="3.40.50.620:FF:000029">
    <property type="entry name" value="tRNA sulfurtransferase"/>
    <property type="match status" value="1"/>
</dbReference>
<dbReference type="Gene3D" id="3.30.2130.30">
    <property type="match status" value="1"/>
</dbReference>
<dbReference type="Gene3D" id="3.40.50.620">
    <property type="entry name" value="HUPs"/>
    <property type="match status" value="1"/>
</dbReference>
<dbReference type="Gene3D" id="3.40.250.10">
    <property type="entry name" value="Rhodanese-like domain"/>
    <property type="match status" value="1"/>
</dbReference>
<dbReference type="HAMAP" id="MF_00021">
    <property type="entry name" value="ThiI"/>
    <property type="match status" value="1"/>
</dbReference>
<dbReference type="InterPro" id="IPR001763">
    <property type="entry name" value="Rhodanese-like_dom"/>
</dbReference>
<dbReference type="InterPro" id="IPR036873">
    <property type="entry name" value="Rhodanese-like_dom_sf"/>
</dbReference>
<dbReference type="InterPro" id="IPR014729">
    <property type="entry name" value="Rossmann-like_a/b/a_fold"/>
</dbReference>
<dbReference type="InterPro" id="IPR020536">
    <property type="entry name" value="ThiI_AANH"/>
</dbReference>
<dbReference type="InterPro" id="IPR054173">
    <property type="entry name" value="ThiI_fer"/>
</dbReference>
<dbReference type="InterPro" id="IPR049961">
    <property type="entry name" value="ThiI_N"/>
</dbReference>
<dbReference type="InterPro" id="IPR026340">
    <property type="entry name" value="THII_Thiazole_biosynth_dom"/>
</dbReference>
<dbReference type="InterPro" id="IPR004114">
    <property type="entry name" value="THUMP_dom"/>
</dbReference>
<dbReference type="InterPro" id="IPR049962">
    <property type="entry name" value="THUMP_ThiI"/>
</dbReference>
<dbReference type="InterPro" id="IPR003720">
    <property type="entry name" value="tRNA_STrfase"/>
</dbReference>
<dbReference type="InterPro" id="IPR050102">
    <property type="entry name" value="tRNA_sulfurtransferase_ThiI"/>
</dbReference>
<dbReference type="NCBIfam" id="TIGR04271">
    <property type="entry name" value="ThiI_C_thiazole"/>
    <property type="match status" value="1"/>
</dbReference>
<dbReference type="NCBIfam" id="TIGR00342">
    <property type="entry name" value="tRNA uracil 4-sulfurtransferase ThiI"/>
    <property type="match status" value="1"/>
</dbReference>
<dbReference type="PANTHER" id="PTHR43209">
    <property type="entry name" value="TRNA SULFURTRANSFERASE"/>
    <property type="match status" value="1"/>
</dbReference>
<dbReference type="PANTHER" id="PTHR43209:SF1">
    <property type="entry name" value="TRNA SULFURTRANSFERASE"/>
    <property type="match status" value="1"/>
</dbReference>
<dbReference type="Pfam" id="PF02568">
    <property type="entry name" value="ThiI"/>
    <property type="match status" value="1"/>
</dbReference>
<dbReference type="Pfam" id="PF22025">
    <property type="entry name" value="ThiI_fer"/>
    <property type="match status" value="1"/>
</dbReference>
<dbReference type="Pfam" id="PF02926">
    <property type="entry name" value="THUMP"/>
    <property type="match status" value="1"/>
</dbReference>
<dbReference type="SMART" id="SM00981">
    <property type="entry name" value="THUMP"/>
    <property type="match status" value="1"/>
</dbReference>
<dbReference type="SUPFAM" id="SSF52402">
    <property type="entry name" value="Adenine nucleotide alpha hydrolases-like"/>
    <property type="match status" value="1"/>
</dbReference>
<dbReference type="SUPFAM" id="SSF52821">
    <property type="entry name" value="Rhodanese/Cell cycle control phosphatase"/>
    <property type="match status" value="1"/>
</dbReference>
<dbReference type="SUPFAM" id="SSF143437">
    <property type="entry name" value="THUMP domain-like"/>
    <property type="match status" value="1"/>
</dbReference>
<dbReference type="PROSITE" id="PS50206">
    <property type="entry name" value="RHODANESE_3"/>
    <property type="match status" value="1"/>
</dbReference>
<dbReference type="PROSITE" id="PS51165">
    <property type="entry name" value="THUMP"/>
    <property type="match status" value="1"/>
</dbReference>
<keyword id="KW-0067">ATP-binding</keyword>
<keyword id="KW-0963">Cytoplasm</keyword>
<keyword id="KW-1015">Disulfide bond</keyword>
<keyword id="KW-0547">Nucleotide-binding</keyword>
<keyword id="KW-0676">Redox-active center</keyword>
<keyword id="KW-0694">RNA-binding</keyword>
<keyword id="KW-0784">Thiamine biosynthesis</keyword>
<keyword id="KW-0808">Transferase</keyword>
<keyword id="KW-0820">tRNA-binding</keyword>
<feature type="chain" id="PRO_1000090034" description="tRNA sulfurtransferase">
    <location>
        <begin position="1"/>
        <end position="482"/>
    </location>
</feature>
<feature type="domain" description="THUMP" evidence="1">
    <location>
        <begin position="61"/>
        <end position="165"/>
    </location>
</feature>
<feature type="domain" description="Rhodanese" evidence="1">
    <location>
        <begin position="404"/>
        <end position="482"/>
    </location>
</feature>
<feature type="active site" description="Cysteine persulfide intermediate" evidence="1">
    <location>
        <position position="456"/>
    </location>
</feature>
<feature type="binding site" evidence="1">
    <location>
        <begin position="183"/>
        <end position="184"/>
    </location>
    <ligand>
        <name>ATP</name>
        <dbReference type="ChEBI" id="CHEBI:30616"/>
    </ligand>
</feature>
<feature type="binding site" evidence="1">
    <location>
        <position position="265"/>
    </location>
    <ligand>
        <name>ATP</name>
        <dbReference type="ChEBI" id="CHEBI:30616"/>
    </ligand>
</feature>
<feature type="binding site" evidence="1">
    <location>
        <position position="287"/>
    </location>
    <ligand>
        <name>ATP</name>
        <dbReference type="ChEBI" id="CHEBI:30616"/>
    </ligand>
</feature>
<feature type="binding site" evidence="1">
    <location>
        <position position="296"/>
    </location>
    <ligand>
        <name>ATP</name>
        <dbReference type="ChEBI" id="CHEBI:30616"/>
    </ligand>
</feature>
<feature type="disulfide bond" description="Redox-active" evidence="1">
    <location>
        <begin position="344"/>
        <end position="456"/>
    </location>
</feature>
<name>THII_SALSV</name>
<proteinExistence type="inferred from homology"/>
<organism>
    <name type="scientific">Salmonella schwarzengrund (strain CVM19633)</name>
    <dbReference type="NCBI Taxonomy" id="439843"/>
    <lineage>
        <taxon>Bacteria</taxon>
        <taxon>Pseudomonadati</taxon>
        <taxon>Pseudomonadota</taxon>
        <taxon>Gammaproteobacteria</taxon>
        <taxon>Enterobacterales</taxon>
        <taxon>Enterobacteriaceae</taxon>
        <taxon>Salmonella</taxon>
    </lineage>
</organism>
<comment type="function">
    <text evidence="1">Catalyzes the ATP-dependent transfer of a sulfur to tRNA to produce 4-thiouridine in position 8 of tRNAs, which functions as a near-UV photosensor. Also catalyzes the transfer of sulfur to the sulfur carrier protein ThiS, forming ThiS-thiocarboxylate. This is a step in the synthesis of thiazole, in the thiamine biosynthesis pathway. The sulfur is donated as persulfide by IscS.</text>
</comment>
<comment type="catalytic activity">
    <reaction evidence="1">
        <text>[ThiI sulfur-carrier protein]-S-sulfanyl-L-cysteine + a uridine in tRNA + 2 reduced [2Fe-2S]-[ferredoxin] + ATP + H(+) = [ThiI sulfur-carrier protein]-L-cysteine + a 4-thiouridine in tRNA + 2 oxidized [2Fe-2S]-[ferredoxin] + AMP + diphosphate</text>
        <dbReference type="Rhea" id="RHEA:24176"/>
        <dbReference type="Rhea" id="RHEA-COMP:10000"/>
        <dbReference type="Rhea" id="RHEA-COMP:10001"/>
        <dbReference type="Rhea" id="RHEA-COMP:13337"/>
        <dbReference type="Rhea" id="RHEA-COMP:13338"/>
        <dbReference type="Rhea" id="RHEA-COMP:13339"/>
        <dbReference type="Rhea" id="RHEA-COMP:13340"/>
        <dbReference type="ChEBI" id="CHEBI:15378"/>
        <dbReference type="ChEBI" id="CHEBI:29950"/>
        <dbReference type="ChEBI" id="CHEBI:30616"/>
        <dbReference type="ChEBI" id="CHEBI:33019"/>
        <dbReference type="ChEBI" id="CHEBI:33737"/>
        <dbReference type="ChEBI" id="CHEBI:33738"/>
        <dbReference type="ChEBI" id="CHEBI:61963"/>
        <dbReference type="ChEBI" id="CHEBI:65315"/>
        <dbReference type="ChEBI" id="CHEBI:136798"/>
        <dbReference type="ChEBI" id="CHEBI:456215"/>
        <dbReference type="EC" id="2.8.1.4"/>
    </reaction>
</comment>
<comment type="catalytic activity">
    <reaction evidence="1">
        <text>[ThiS sulfur-carrier protein]-C-terminal Gly-Gly-AMP + S-sulfanyl-L-cysteinyl-[cysteine desulfurase] + AH2 = [ThiS sulfur-carrier protein]-C-terminal-Gly-aminoethanethioate + L-cysteinyl-[cysteine desulfurase] + A + AMP + 2 H(+)</text>
        <dbReference type="Rhea" id="RHEA:43340"/>
        <dbReference type="Rhea" id="RHEA-COMP:12157"/>
        <dbReference type="Rhea" id="RHEA-COMP:12158"/>
        <dbReference type="Rhea" id="RHEA-COMP:12910"/>
        <dbReference type="Rhea" id="RHEA-COMP:19908"/>
        <dbReference type="ChEBI" id="CHEBI:13193"/>
        <dbReference type="ChEBI" id="CHEBI:15378"/>
        <dbReference type="ChEBI" id="CHEBI:17499"/>
        <dbReference type="ChEBI" id="CHEBI:29950"/>
        <dbReference type="ChEBI" id="CHEBI:61963"/>
        <dbReference type="ChEBI" id="CHEBI:90618"/>
        <dbReference type="ChEBI" id="CHEBI:232372"/>
        <dbReference type="ChEBI" id="CHEBI:456215"/>
    </reaction>
</comment>
<comment type="pathway">
    <text evidence="1">Cofactor biosynthesis; thiamine diphosphate biosynthesis.</text>
</comment>
<comment type="subcellular location">
    <subcellularLocation>
        <location evidence="1">Cytoplasm</location>
    </subcellularLocation>
</comment>
<comment type="similarity">
    <text evidence="1">Belongs to the ThiI family.</text>
</comment>
<protein>
    <recommendedName>
        <fullName evidence="1">tRNA sulfurtransferase</fullName>
        <ecNumber evidence="1">2.8.1.4</ecNumber>
    </recommendedName>
    <alternativeName>
        <fullName evidence="1">Sulfur carrier protein ThiS sulfurtransferase</fullName>
    </alternativeName>
    <alternativeName>
        <fullName evidence="1">Thiamine biosynthesis protein ThiI</fullName>
    </alternativeName>
    <alternativeName>
        <fullName evidence="1">tRNA 4-thiouridine synthase</fullName>
    </alternativeName>
</protein>
<sequence length="482" mass="54777">MKFIIKLFPEITIKSQSVRLRFIKILTGNIRNVLKHYDETLAVVRHWDNIEVRAKDENQRLAIRDALTRIPGIHHILEVEDVPFTDMHDIFEKALAQYREQLEGKTFCVRVKRRGKHEFSSIEVERYVGGGLNQHIESARVKLTNPDVTVHLEVEDDRLLLIKGRYEGIGGFPIGTQEDVLSLISGGFDSGVSSYMLMRRGCRVHYCFFNLGGAAHEIGVRQVAHYLWNRFGSSHRVRFVAINFEPVVGEILEKVDDGQMGVVLKRMMVRAASKVAERYGVQALVTGEALGQVSSQTLTNLRLIDNVSDTLILRPLISYDKEHIINLARQIGTEDFARTMPEYCGVISKSPTVKAIKAKIEAEEENFDFSILDKVVEEANNVDIREIAQQTQQEVVEVETVSGFGANDVILDIRSVDEQDDKPLKVEGVDVVSLPFYKLSTKFGDLDQSKTWLLWCERGVMSRLQALYLREQGFANVKVYRP</sequence>
<accession>B4TMA5</accession>
<gene>
    <name evidence="1" type="primary">thiI</name>
    <name type="ordered locus">SeSA_A0485</name>
</gene>
<reference key="1">
    <citation type="journal article" date="2011" name="J. Bacteriol.">
        <title>Comparative genomics of 28 Salmonella enterica isolates: evidence for CRISPR-mediated adaptive sublineage evolution.</title>
        <authorList>
            <person name="Fricke W.F."/>
            <person name="Mammel M.K."/>
            <person name="McDermott P.F."/>
            <person name="Tartera C."/>
            <person name="White D.G."/>
            <person name="Leclerc J.E."/>
            <person name="Ravel J."/>
            <person name="Cebula T.A."/>
        </authorList>
    </citation>
    <scope>NUCLEOTIDE SEQUENCE [LARGE SCALE GENOMIC DNA]</scope>
    <source>
        <strain>CVM19633</strain>
    </source>
</reference>